<sequence>MADKSDLNALSGRFRGYYPVVIDVETAGFNAQSDALLEIAAVTLQMNKEGWLLPDETLHFHVEPFEGANLQPEALAFNGIDPTNPLRGAVSEHDALHAIFKAVRKGIKDKGCNRAIIVAHNANFDHSFVMAAAERASLKRNPFHPFATFDTAALSGLVLGQTVLAKACLAAGIPFDSSQAHSALYDTLQTAKLFCELVNRWKKLGGWPLPAAESE</sequence>
<protein>
    <recommendedName>
        <fullName evidence="1">Ribonuclease T</fullName>
        <ecNumber evidence="1">3.1.13.-</ecNumber>
    </recommendedName>
    <alternativeName>
        <fullName evidence="1">Exoribonuclease T</fullName>
        <shortName evidence="1">RNase T</shortName>
    </alternativeName>
</protein>
<feature type="chain" id="PRO_1000058191" description="Ribonuclease T">
    <location>
        <begin position="1"/>
        <end position="215"/>
    </location>
</feature>
<feature type="domain" description="Exonuclease" evidence="1">
    <location>
        <begin position="20"/>
        <end position="194"/>
    </location>
</feature>
<feature type="active site" description="Proton donor/acceptor" evidence="1">
    <location>
        <position position="181"/>
    </location>
</feature>
<feature type="binding site" evidence="1">
    <location>
        <position position="23"/>
    </location>
    <ligand>
        <name>Mg(2+)</name>
        <dbReference type="ChEBI" id="CHEBI:18420"/>
        <label>1</label>
        <note>catalytic</note>
    </ligand>
</feature>
<feature type="binding site" evidence="1">
    <location>
        <position position="23"/>
    </location>
    <ligand>
        <name>Mg(2+)</name>
        <dbReference type="ChEBI" id="CHEBI:18420"/>
        <label>2</label>
        <note>catalytic</note>
    </ligand>
</feature>
<feature type="binding site" evidence="1">
    <location>
        <position position="25"/>
    </location>
    <ligand>
        <name>Mg(2+)</name>
        <dbReference type="ChEBI" id="CHEBI:18420"/>
        <label>2</label>
        <note>catalytic</note>
    </ligand>
</feature>
<feature type="binding site" evidence="1">
    <location>
        <position position="181"/>
    </location>
    <ligand>
        <name>Mg(2+)</name>
        <dbReference type="ChEBI" id="CHEBI:18420"/>
        <label>2</label>
        <note>catalytic</note>
    </ligand>
</feature>
<feature type="binding site" evidence="1">
    <location>
        <position position="186"/>
    </location>
    <ligand>
        <name>Mg(2+)</name>
        <dbReference type="ChEBI" id="CHEBI:18420"/>
        <label>2</label>
        <note>catalytic</note>
    </ligand>
</feature>
<feature type="site" description="Important for substrate binding and specificity" evidence="1">
    <location>
        <position position="29"/>
    </location>
</feature>
<feature type="site" description="Important for substrate binding and specificity" evidence="1">
    <location>
        <position position="77"/>
    </location>
</feature>
<feature type="site" description="Important for substrate binding and specificity" evidence="1">
    <location>
        <position position="124"/>
    </location>
</feature>
<feature type="site" description="Important for substrate binding and specificity" evidence="1">
    <location>
        <position position="146"/>
    </location>
</feature>
<dbReference type="EC" id="3.1.13.-" evidence="1"/>
<dbReference type="EMBL" id="CP000720">
    <property type="protein sequence ID" value="ABS48508.1"/>
    <property type="molecule type" value="Genomic_DNA"/>
</dbReference>
<dbReference type="RefSeq" id="WP_012105036.1">
    <property type="nucleotide sequence ID" value="NC_009708.1"/>
</dbReference>
<dbReference type="SMR" id="A7FHK6"/>
<dbReference type="KEGG" id="ypi:YpsIP31758_1759"/>
<dbReference type="HOGENOM" id="CLU_082724_0_0_6"/>
<dbReference type="Proteomes" id="UP000002412">
    <property type="component" value="Chromosome"/>
</dbReference>
<dbReference type="GO" id="GO:0005829">
    <property type="term" value="C:cytosol"/>
    <property type="evidence" value="ECO:0007669"/>
    <property type="project" value="TreeGrafter"/>
</dbReference>
<dbReference type="GO" id="GO:0008408">
    <property type="term" value="F:3'-5' exonuclease activity"/>
    <property type="evidence" value="ECO:0007669"/>
    <property type="project" value="TreeGrafter"/>
</dbReference>
<dbReference type="GO" id="GO:0000287">
    <property type="term" value="F:magnesium ion binding"/>
    <property type="evidence" value="ECO:0007669"/>
    <property type="project" value="UniProtKB-UniRule"/>
</dbReference>
<dbReference type="GO" id="GO:0003676">
    <property type="term" value="F:nucleic acid binding"/>
    <property type="evidence" value="ECO:0007669"/>
    <property type="project" value="InterPro"/>
</dbReference>
<dbReference type="GO" id="GO:0016896">
    <property type="term" value="F:RNA exonuclease activity, producing 5'-phosphomonoesters"/>
    <property type="evidence" value="ECO:0007669"/>
    <property type="project" value="UniProtKB-UniRule"/>
</dbReference>
<dbReference type="GO" id="GO:0045004">
    <property type="term" value="P:DNA replication proofreading"/>
    <property type="evidence" value="ECO:0007669"/>
    <property type="project" value="TreeGrafter"/>
</dbReference>
<dbReference type="GO" id="GO:0008033">
    <property type="term" value="P:tRNA processing"/>
    <property type="evidence" value="ECO:0007669"/>
    <property type="project" value="UniProtKB-KW"/>
</dbReference>
<dbReference type="CDD" id="cd06134">
    <property type="entry name" value="RNaseT"/>
    <property type="match status" value="1"/>
</dbReference>
<dbReference type="FunFam" id="3.30.420.10:FF:000009">
    <property type="entry name" value="Ribonuclease T"/>
    <property type="match status" value="1"/>
</dbReference>
<dbReference type="Gene3D" id="3.30.420.10">
    <property type="entry name" value="Ribonuclease H-like superfamily/Ribonuclease H"/>
    <property type="match status" value="1"/>
</dbReference>
<dbReference type="HAMAP" id="MF_00157">
    <property type="entry name" value="RNase_T"/>
    <property type="match status" value="1"/>
</dbReference>
<dbReference type="InterPro" id="IPR013520">
    <property type="entry name" value="Exonuclease_RNaseT/DNA_pol3"/>
</dbReference>
<dbReference type="InterPro" id="IPR005987">
    <property type="entry name" value="RNase_T"/>
</dbReference>
<dbReference type="InterPro" id="IPR012337">
    <property type="entry name" value="RNaseH-like_sf"/>
</dbReference>
<dbReference type="InterPro" id="IPR036397">
    <property type="entry name" value="RNaseH_sf"/>
</dbReference>
<dbReference type="NCBIfam" id="TIGR01298">
    <property type="entry name" value="RNaseT"/>
    <property type="match status" value="1"/>
</dbReference>
<dbReference type="PANTHER" id="PTHR30231">
    <property type="entry name" value="DNA POLYMERASE III SUBUNIT EPSILON"/>
    <property type="match status" value="1"/>
</dbReference>
<dbReference type="PANTHER" id="PTHR30231:SF2">
    <property type="entry name" value="RIBONUCLEASE T"/>
    <property type="match status" value="1"/>
</dbReference>
<dbReference type="Pfam" id="PF00929">
    <property type="entry name" value="RNase_T"/>
    <property type="match status" value="1"/>
</dbReference>
<dbReference type="SMART" id="SM00479">
    <property type="entry name" value="EXOIII"/>
    <property type="match status" value="1"/>
</dbReference>
<dbReference type="SUPFAM" id="SSF53098">
    <property type="entry name" value="Ribonuclease H-like"/>
    <property type="match status" value="1"/>
</dbReference>
<comment type="function">
    <text evidence="1">Trims short 3' overhangs of a variety of RNA species, leaving a one or two nucleotide 3' overhang. Responsible for the end-turnover of tRNA: specifically removes the terminal AMP residue from uncharged tRNA (tRNA-C-C-A). Also appears to be involved in tRNA biosynthesis.</text>
</comment>
<comment type="cofactor">
    <cofactor evidence="1">
        <name>Mg(2+)</name>
        <dbReference type="ChEBI" id="CHEBI:18420"/>
    </cofactor>
    <text evidence="1">Binds two Mg(2+) per subunit. The active form of the enzyme binds two Mg(2+) ions in its active site. The first Mg(2+) forms only one salt bridge with the protein.</text>
</comment>
<comment type="subunit">
    <text evidence="1">Homodimer.</text>
</comment>
<comment type="similarity">
    <text evidence="1">Belongs to the RNase T family.</text>
</comment>
<evidence type="ECO:0000255" key="1">
    <source>
        <dbReference type="HAMAP-Rule" id="MF_00157"/>
    </source>
</evidence>
<keyword id="KW-0269">Exonuclease</keyword>
<keyword id="KW-0378">Hydrolase</keyword>
<keyword id="KW-0460">Magnesium</keyword>
<keyword id="KW-0479">Metal-binding</keyword>
<keyword id="KW-0540">Nuclease</keyword>
<keyword id="KW-0819">tRNA processing</keyword>
<proteinExistence type="inferred from homology"/>
<gene>
    <name evidence="1" type="primary">rnt</name>
    <name type="ordered locus">YpsIP31758_1759</name>
</gene>
<reference key="1">
    <citation type="journal article" date="2007" name="PLoS Genet.">
        <title>The complete genome sequence of Yersinia pseudotuberculosis IP31758, the causative agent of Far East scarlet-like fever.</title>
        <authorList>
            <person name="Eppinger M."/>
            <person name="Rosovitz M.J."/>
            <person name="Fricke W.F."/>
            <person name="Rasko D.A."/>
            <person name="Kokorina G."/>
            <person name="Fayolle C."/>
            <person name="Lindler L.E."/>
            <person name="Carniel E."/>
            <person name="Ravel J."/>
        </authorList>
    </citation>
    <scope>NUCLEOTIDE SEQUENCE [LARGE SCALE GENOMIC DNA]</scope>
    <source>
        <strain>IP 31758</strain>
    </source>
</reference>
<name>RNT_YERP3</name>
<accession>A7FHK6</accession>
<organism>
    <name type="scientific">Yersinia pseudotuberculosis serotype O:1b (strain IP 31758)</name>
    <dbReference type="NCBI Taxonomy" id="349747"/>
    <lineage>
        <taxon>Bacteria</taxon>
        <taxon>Pseudomonadati</taxon>
        <taxon>Pseudomonadota</taxon>
        <taxon>Gammaproteobacteria</taxon>
        <taxon>Enterobacterales</taxon>
        <taxon>Yersiniaceae</taxon>
        <taxon>Yersinia</taxon>
    </lineage>
</organism>